<proteinExistence type="inferred from homology"/>
<reference key="1">
    <citation type="submission" date="2007-04" db="EMBL/GenBank/DDBJ databases">
        <title>Complete sequence of plasmid pNL2 of Novosphingobium aromaticivorans DSM 12444.</title>
        <authorList>
            <consortium name="US DOE Joint Genome Institute"/>
            <person name="Copeland A."/>
            <person name="Lucas S."/>
            <person name="Lapidus A."/>
            <person name="Barry K."/>
            <person name="Detter J.C."/>
            <person name="Glavina del Rio T."/>
            <person name="Hammon N."/>
            <person name="Israni S."/>
            <person name="Dalin E."/>
            <person name="Tice H."/>
            <person name="Pitluck S."/>
            <person name="Chertkov O."/>
            <person name="Han C."/>
            <person name="Thomson S."/>
            <person name="Schmutz J."/>
            <person name="Larimer F."/>
            <person name="Land M."/>
            <person name="Kyrpides N."/>
            <person name="Ivanova N."/>
            <person name="Fredrickson J."/>
            <person name="Romine M.F."/>
            <person name="Richardson P."/>
        </authorList>
    </citation>
    <scope>NUCLEOTIDE SEQUENCE [LARGE SCALE GENOMIC DNA]</scope>
    <source>
        <strain>ATCC 700278 / DSM 12444 / CCUG 56034 / CIP 105152 / NBRC 16084 / F199</strain>
    </source>
</reference>
<geneLocation type="plasmid">
    <name>pNL2</name>
</geneLocation>
<protein>
    <recommendedName>
        <fullName evidence="1">4-hydroxy-2-oxovalerate aldolase 1</fullName>
        <shortName evidence="1">HOA 1</shortName>
        <ecNumber evidence="1">4.1.3.39</ecNumber>
    </recommendedName>
    <alternativeName>
        <fullName evidence="1">4-hydroxy-2-keto-pentanoic acid aldolase 1</fullName>
    </alternativeName>
    <alternativeName>
        <fullName evidence="1">4-hydroxy-2-oxopentanoate aldolase 1</fullName>
    </alternativeName>
</protein>
<comment type="catalytic activity">
    <reaction evidence="1">
        <text>(S)-4-hydroxy-2-oxopentanoate = acetaldehyde + pyruvate</text>
        <dbReference type="Rhea" id="RHEA:22624"/>
        <dbReference type="ChEBI" id="CHEBI:15343"/>
        <dbReference type="ChEBI" id="CHEBI:15361"/>
        <dbReference type="ChEBI" id="CHEBI:73143"/>
        <dbReference type="EC" id="4.1.3.39"/>
    </reaction>
</comment>
<comment type="similarity">
    <text evidence="1">Belongs to the 4-hydroxy-2-oxovalerate aldolase family.</text>
</comment>
<gene>
    <name type="ordered locus">Saro_3687</name>
</gene>
<dbReference type="EC" id="4.1.3.39" evidence="1"/>
<dbReference type="EMBL" id="CP000677">
    <property type="protein sequence ID" value="ABP64546.1"/>
    <property type="molecule type" value="Genomic_DNA"/>
</dbReference>
<dbReference type="RefSeq" id="WP_011906930.1">
    <property type="nucleotide sequence ID" value="NC_009427.1"/>
</dbReference>
<dbReference type="SMR" id="A4XF35"/>
<dbReference type="KEGG" id="nar:Saro_3687"/>
<dbReference type="eggNOG" id="COG0119">
    <property type="taxonomic scope" value="Bacteria"/>
</dbReference>
<dbReference type="HOGENOM" id="CLU_049173_0_0_5"/>
<dbReference type="Proteomes" id="UP000009134">
    <property type="component" value="Plasmid pNL2"/>
</dbReference>
<dbReference type="GO" id="GO:0003852">
    <property type="term" value="F:2-isopropylmalate synthase activity"/>
    <property type="evidence" value="ECO:0007669"/>
    <property type="project" value="TreeGrafter"/>
</dbReference>
<dbReference type="GO" id="GO:0008701">
    <property type="term" value="F:4-hydroxy-2-oxovalerate aldolase activity"/>
    <property type="evidence" value="ECO:0007669"/>
    <property type="project" value="UniProtKB-UniRule"/>
</dbReference>
<dbReference type="GO" id="GO:0030145">
    <property type="term" value="F:manganese ion binding"/>
    <property type="evidence" value="ECO:0007669"/>
    <property type="project" value="UniProtKB-UniRule"/>
</dbReference>
<dbReference type="GO" id="GO:0009056">
    <property type="term" value="P:catabolic process"/>
    <property type="evidence" value="ECO:0007669"/>
    <property type="project" value="UniProtKB-KW"/>
</dbReference>
<dbReference type="GO" id="GO:0009098">
    <property type="term" value="P:L-leucine biosynthetic process"/>
    <property type="evidence" value="ECO:0007669"/>
    <property type="project" value="TreeGrafter"/>
</dbReference>
<dbReference type="CDD" id="cd07943">
    <property type="entry name" value="DRE_TIM_HOA"/>
    <property type="match status" value="1"/>
</dbReference>
<dbReference type="FunFam" id="1.10.8.60:FF:000042">
    <property type="entry name" value="4-hydroxy-2-oxovalerate aldolase"/>
    <property type="match status" value="1"/>
</dbReference>
<dbReference type="Gene3D" id="1.10.8.60">
    <property type="match status" value="1"/>
</dbReference>
<dbReference type="Gene3D" id="3.20.20.70">
    <property type="entry name" value="Aldolase class I"/>
    <property type="match status" value="1"/>
</dbReference>
<dbReference type="HAMAP" id="MF_01656">
    <property type="entry name" value="HOA"/>
    <property type="match status" value="1"/>
</dbReference>
<dbReference type="InterPro" id="IPR050073">
    <property type="entry name" value="2-IPM_HCS-like"/>
</dbReference>
<dbReference type="InterPro" id="IPR017629">
    <property type="entry name" value="4OH_2_O-val_aldolase"/>
</dbReference>
<dbReference type="InterPro" id="IPR013785">
    <property type="entry name" value="Aldolase_TIM"/>
</dbReference>
<dbReference type="InterPro" id="IPR012425">
    <property type="entry name" value="DmpG_comm"/>
</dbReference>
<dbReference type="InterPro" id="IPR035685">
    <property type="entry name" value="DRE_TIM_HOA"/>
</dbReference>
<dbReference type="InterPro" id="IPR000891">
    <property type="entry name" value="PYR_CT"/>
</dbReference>
<dbReference type="NCBIfam" id="TIGR03217">
    <property type="entry name" value="4OH_2_O_val_ald"/>
    <property type="match status" value="1"/>
</dbReference>
<dbReference type="NCBIfam" id="NF006049">
    <property type="entry name" value="PRK08195.1"/>
    <property type="match status" value="1"/>
</dbReference>
<dbReference type="PANTHER" id="PTHR10277:SF9">
    <property type="entry name" value="2-ISOPROPYLMALATE SYNTHASE 1, CHLOROPLASTIC-RELATED"/>
    <property type="match status" value="1"/>
</dbReference>
<dbReference type="PANTHER" id="PTHR10277">
    <property type="entry name" value="HOMOCITRATE SYNTHASE-RELATED"/>
    <property type="match status" value="1"/>
</dbReference>
<dbReference type="Pfam" id="PF07836">
    <property type="entry name" value="DmpG_comm"/>
    <property type="match status" value="1"/>
</dbReference>
<dbReference type="Pfam" id="PF00682">
    <property type="entry name" value="HMGL-like"/>
    <property type="match status" value="1"/>
</dbReference>
<dbReference type="SUPFAM" id="SSF51569">
    <property type="entry name" value="Aldolase"/>
    <property type="match status" value="1"/>
</dbReference>
<dbReference type="SUPFAM" id="SSF89000">
    <property type="entry name" value="post-HMGL domain-like"/>
    <property type="match status" value="1"/>
</dbReference>
<dbReference type="PROSITE" id="PS50991">
    <property type="entry name" value="PYR_CT"/>
    <property type="match status" value="1"/>
</dbReference>
<organism>
    <name type="scientific">Novosphingobium aromaticivorans (strain ATCC 700278 / DSM 12444 / CCUG 56034 / CIP 105152 / NBRC 16084 / F199)</name>
    <dbReference type="NCBI Taxonomy" id="279238"/>
    <lineage>
        <taxon>Bacteria</taxon>
        <taxon>Pseudomonadati</taxon>
        <taxon>Pseudomonadota</taxon>
        <taxon>Alphaproteobacteria</taxon>
        <taxon>Sphingomonadales</taxon>
        <taxon>Sphingomonadaceae</taxon>
        <taxon>Novosphingobium</taxon>
    </lineage>
</organism>
<keyword id="KW-0058">Aromatic hydrocarbons catabolism</keyword>
<keyword id="KW-0456">Lyase</keyword>
<keyword id="KW-0464">Manganese</keyword>
<keyword id="KW-0479">Metal-binding</keyword>
<keyword id="KW-0614">Plasmid</keyword>
<keyword id="KW-1185">Reference proteome</keyword>
<evidence type="ECO:0000255" key="1">
    <source>
        <dbReference type="HAMAP-Rule" id="MF_01656"/>
    </source>
</evidence>
<feature type="chain" id="PRO_0000387875" description="4-hydroxy-2-oxovalerate aldolase 1">
    <location>
        <begin position="1"/>
        <end position="346"/>
    </location>
</feature>
<feature type="domain" description="Pyruvate carboxyltransferase" evidence="1">
    <location>
        <begin position="13"/>
        <end position="265"/>
    </location>
</feature>
<feature type="active site" description="Proton acceptor" evidence="1">
    <location>
        <position position="25"/>
    </location>
</feature>
<feature type="binding site" evidence="1">
    <location>
        <begin position="21"/>
        <end position="22"/>
    </location>
    <ligand>
        <name>substrate</name>
    </ligand>
</feature>
<feature type="binding site" evidence="1">
    <location>
        <position position="22"/>
    </location>
    <ligand>
        <name>Mn(2+)</name>
        <dbReference type="ChEBI" id="CHEBI:29035"/>
    </ligand>
</feature>
<feature type="binding site" evidence="1">
    <location>
        <position position="175"/>
    </location>
    <ligand>
        <name>substrate</name>
    </ligand>
</feature>
<feature type="binding site" evidence="1">
    <location>
        <position position="204"/>
    </location>
    <ligand>
        <name>Mn(2+)</name>
        <dbReference type="ChEBI" id="CHEBI:29035"/>
    </ligand>
</feature>
<feature type="binding site" evidence="1">
    <location>
        <position position="204"/>
    </location>
    <ligand>
        <name>substrate</name>
    </ligand>
</feature>
<feature type="binding site" evidence="1">
    <location>
        <position position="206"/>
    </location>
    <ligand>
        <name>Mn(2+)</name>
        <dbReference type="ChEBI" id="CHEBI:29035"/>
    </ligand>
</feature>
<feature type="binding site" evidence="1">
    <location>
        <position position="295"/>
    </location>
    <ligand>
        <name>substrate</name>
    </ligand>
</feature>
<feature type="site" description="Transition state stabilizer" evidence="1">
    <location>
        <position position="21"/>
    </location>
</feature>
<accession>A4XF35</accession>
<sequence length="346" mass="37326">MTSNFNVEAGDKLYIQDVTLRDGMHAVRHMYGIDHVRSIASALDKAGVDAIEVAHGDGLSGASFNYGFGAHTDWEWLEAVADVLEKSVLTTLILPGVGTVEELRRAYDIGVRSVRVATHCTEADVSKQHIGIARDLGMDVSGFLMMSHMIEPEALAQQASLMESYGAQCVYVTDSGGALDMDGVKARLEAYDRVLKPETQRGIHAHHNLALGVANSIVAAQCGAVRIDASLTGMGAGAGNAPLEVFIAAADRKGWNHGCDVMMLMDAAEDLVRPLQDRPVRVDRETLALGYAGVYSSFLRHAEKAAETYGLDTRTILVELGRRKMVGGQEDMIVDVALDMLKEQQA</sequence>
<name>HOA1_NOVAD</name>